<sequence length="428" mass="47570">MTSVVVVGTQWGDEGKGKITDFLSANAEVIARYQGGDNAGHTIVIDGKKFKLHLIPSGIFFPEKISVIGNGMVVNPKSLVKELSYLHEEGVTTDNLRISDRAHVILPYHIELDRLQEEAKGDNKIGTTIKGIGPAYMDKAARVGIRIADLLDKDIFRERLERNLAEKNRLFEKLYDSKAIVFDDIFEEYYEYGQQIKKYVIDTSVILNDALDNGKRVLFEGAQGVMLDIDQGTYPFVTSSNPVAGGVTIGSGVGPSKIDKVVGVCKAYTSRVGDGPFPTELFDEVGERIREVGHEYGTTTGRPRRVGWFDSVVMRHSRRVSGITNLSLNSIDVLSGLDTVKICVAYDLDGQRIDYYPASLEQLKRCKPIYEELPGWSEDITGVRNLEDLPENARNYVRRVSELVGVRISTFSVGPGREQTNILESVWS</sequence>
<reference key="1">
    <citation type="journal article" date="2007" name="J. Bacteriol.">
        <title>Genome sequence of Avery's virulent serotype 2 strain D39 of Streptococcus pneumoniae and comparison with that of unencapsulated laboratory strain R6.</title>
        <authorList>
            <person name="Lanie J.A."/>
            <person name="Ng W.-L."/>
            <person name="Kazmierczak K.M."/>
            <person name="Andrzejewski T.M."/>
            <person name="Davidsen T.M."/>
            <person name="Wayne K.J."/>
            <person name="Tettelin H."/>
            <person name="Glass J.I."/>
            <person name="Winkler M.E."/>
        </authorList>
    </citation>
    <scope>NUCLEOTIDE SEQUENCE [LARGE SCALE GENOMIC DNA]</scope>
    <source>
        <strain>D39 / NCTC 7466</strain>
    </source>
</reference>
<organism>
    <name type="scientific">Streptococcus pneumoniae serotype 2 (strain D39 / NCTC 7466)</name>
    <dbReference type="NCBI Taxonomy" id="373153"/>
    <lineage>
        <taxon>Bacteria</taxon>
        <taxon>Bacillati</taxon>
        <taxon>Bacillota</taxon>
        <taxon>Bacilli</taxon>
        <taxon>Lactobacillales</taxon>
        <taxon>Streptococcaceae</taxon>
        <taxon>Streptococcus</taxon>
    </lineage>
</organism>
<evidence type="ECO:0000255" key="1">
    <source>
        <dbReference type="HAMAP-Rule" id="MF_00011"/>
    </source>
</evidence>
<gene>
    <name evidence="1" type="primary">purA</name>
    <name type="ordered locus">SPD_0024</name>
</gene>
<keyword id="KW-0963">Cytoplasm</keyword>
<keyword id="KW-0342">GTP-binding</keyword>
<keyword id="KW-0436">Ligase</keyword>
<keyword id="KW-0460">Magnesium</keyword>
<keyword id="KW-0479">Metal-binding</keyword>
<keyword id="KW-0547">Nucleotide-binding</keyword>
<keyword id="KW-0658">Purine biosynthesis</keyword>
<keyword id="KW-1185">Reference proteome</keyword>
<feature type="chain" id="PRO_1000000926" description="Adenylosuccinate synthetase">
    <location>
        <begin position="1"/>
        <end position="428"/>
    </location>
</feature>
<feature type="active site" description="Proton acceptor" evidence="1">
    <location>
        <position position="13"/>
    </location>
</feature>
<feature type="active site" description="Proton donor" evidence="1">
    <location>
        <position position="41"/>
    </location>
</feature>
<feature type="binding site" evidence="1">
    <location>
        <begin position="12"/>
        <end position="18"/>
    </location>
    <ligand>
        <name>GTP</name>
        <dbReference type="ChEBI" id="CHEBI:37565"/>
    </ligand>
</feature>
<feature type="binding site" description="in other chain" evidence="1">
    <location>
        <begin position="13"/>
        <end position="16"/>
    </location>
    <ligand>
        <name>IMP</name>
        <dbReference type="ChEBI" id="CHEBI:58053"/>
        <note>ligand shared between dimeric partners</note>
    </ligand>
</feature>
<feature type="binding site" evidence="1">
    <location>
        <position position="13"/>
    </location>
    <ligand>
        <name>Mg(2+)</name>
        <dbReference type="ChEBI" id="CHEBI:18420"/>
    </ligand>
</feature>
<feature type="binding site" description="in other chain" evidence="1">
    <location>
        <begin position="38"/>
        <end position="41"/>
    </location>
    <ligand>
        <name>IMP</name>
        <dbReference type="ChEBI" id="CHEBI:58053"/>
        <note>ligand shared between dimeric partners</note>
    </ligand>
</feature>
<feature type="binding site" evidence="1">
    <location>
        <begin position="40"/>
        <end position="42"/>
    </location>
    <ligand>
        <name>GTP</name>
        <dbReference type="ChEBI" id="CHEBI:37565"/>
    </ligand>
</feature>
<feature type="binding site" evidence="1">
    <location>
        <position position="40"/>
    </location>
    <ligand>
        <name>Mg(2+)</name>
        <dbReference type="ChEBI" id="CHEBI:18420"/>
    </ligand>
</feature>
<feature type="binding site" description="in other chain" evidence="1">
    <location>
        <position position="128"/>
    </location>
    <ligand>
        <name>IMP</name>
        <dbReference type="ChEBI" id="CHEBI:58053"/>
        <note>ligand shared between dimeric partners</note>
    </ligand>
</feature>
<feature type="binding site" evidence="1">
    <location>
        <position position="142"/>
    </location>
    <ligand>
        <name>IMP</name>
        <dbReference type="ChEBI" id="CHEBI:58053"/>
        <note>ligand shared between dimeric partners</note>
    </ligand>
</feature>
<feature type="binding site" description="in other chain" evidence="1">
    <location>
        <position position="223"/>
    </location>
    <ligand>
        <name>IMP</name>
        <dbReference type="ChEBI" id="CHEBI:58053"/>
        <note>ligand shared between dimeric partners</note>
    </ligand>
</feature>
<feature type="binding site" description="in other chain" evidence="1">
    <location>
        <position position="238"/>
    </location>
    <ligand>
        <name>IMP</name>
        <dbReference type="ChEBI" id="CHEBI:58053"/>
        <note>ligand shared between dimeric partners</note>
    </ligand>
</feature>
<feature type="binding site" evidence="1">
    <location>
        <begin position="298"/>
        <end position="304"/>
    </location>
    <ligand>
        <name>substrate</name>
    </ligand>
</feature>
<feature type="binding site" description="in other chain" evidence="1">
    <location>
        <position position="302"/>
    </location>
    <ligand>
        <name>IMP</name>
        <dbReference type="ChEBI" id="CHEBI:58053"/>
        <note>ligand shared between dimeric partners</note>
    </ligand>
</feature>
<feature type="binding site" evidence="1">
    <location>
        <position position="304"/>
    </location>
    <ligand>
        <name>GTP</name>
        <dbReference type="ChEBI" id="CHEBI:37565"/>
    </ligand>
</feature>
<feature type="binding site" evidence="1">
    <location>
        <begin position="330"/>
        <end position="332"/>
    </location>
    <ligand>
        <name>GTP</name>
        <dbReference type="ChEBI" id="CHEBI:37565"/>
    </ligand>
</feature>
<feature type="binding site" evidence="1">
    <location>
        <begin position="412"/>
        <end position="414"/>
    </location>
    <ligand>
        <name>GTP</name>
        <dbReference type="ChEBI" id="CHEBI:37565"/>
    </ligand>
</feature>
<protein>
    <recommendedName>
        <fullName evidence="1">Adenylosuccinate synthetase</fullName>
        <shortName evidence="1">AMPSase</shortName>
        <shortName evidence="1">AdSS</shortName>
        <ecNumber evidence="1">6.3.4.4</ecNumber>
    </recommendedName>
    <alternativeName>
        <fullName evidence="1">IMP--aspartate ligase</fullName>
    </alternativeName>
</protein>
<proteinExistence type="inferred from homology"/>
<dbReference type="EC" id="6.3.4.4" evidence="1"/>
<dbReference type="EMBL" id="CP000410">
    <property type="protein sequence ID" value="ABJ54068.1"/>
    <property type="molecule type" value="Genomic_DNA"/>
</dbReference>
<dbReference type="RefSeq" id="WP_000205044.1">
    <property type="nucleotide sequence ID" value="NZ_JAMLJR010000021.1"/>
</dbReference>
<dbReference type="SMR" id="Q04N48"/>
<dbReference type="PaxDb" id="373153-SPD_0024"/>
<dbReference type="KEGG" id="spd:SPD_0024"/>
<dbReference type="eggNOG" id="COG0104">
    <property type="taxonomic scope" value="Bacteria"/>
</dbReference>
<dbReference type="HOGENOM" id="CLU_029848_0_0_9"/>
<dbReference type="BioCyc" id="SPNE373153:G1G6V-23-MONOMER"/>
<dbReference type="UniPathway" id="UPA00075">
    <property type="reaction ID" value="UER00335"/>
</dbReference>
<dbReference type="Proteomes" id="UP000001452">
    <property type="component" value="Chromosome"/>
</dbReference>
<dbReference type="GO" id="GO:0005737">
    <property type="term" value="C:cytoplasm"/>
    <property type="evidence" value="ECO:0007669"/>
    <property type="project" value="UniProtKB-SubCell"/>
</dbReference>
<dbReference type="GO" id="GO:0004019">
    <property type="term" value="F:adenylosuccinate synthase activity"/>
    <property type="evidence" value="ECO:0007669"/>
    <property type="project" value="UniProtKB-UniRule"/>
</dbReference>
<dbReference type="GO" id="GO:0005525">
    <property type="term" value="F:GTP binding"/>
    <property type="evidence" value="ECO:0007669"/>
    <property type="project" value="UniProtKB-UniRule"/>
</dbReference>
<dbReference type="GO" id="GO:0000287">
    <property type="term" value="F:magnesium ion binding"/>
    <property type="evidence" value="ECO:0007669"/>
    <property type="project" value="UniProtKB-UniRule"/>
</dbReference>
<dbReference type="GO" id="GO:0044208">
    <property type="term" value="P:'de novo' AMP biosynthetic process"/>
    <property type="evidence" value="ECO:0007669"/>
    <property type="project" value="UniProtKB-UniRule"/>
</dbReference>
<dbReference type="GO" id="GO:0046040">
    <property type="term" value="P:IMP metabolic process"/>
    <property type="evidence" value="ECO:0007669"/>
    <property type="project" value="TreeGrafter"/>
</dbReference>
<dbReference type="CDD" id="cd03108">
    <property type="entry name" value="AdSS"/>
    <property type="match status" value="1"/>
</dbReference>
<dbReference type="FunFam" id="1.10.300.10:FF:000001">
    <property type="entry name" value="Adenylosuccinate synthetase"/>
    <property type="match status" value="1"/>
</dbReference>
<dbReference type="FunFam" id="3.90.170.10:FF:000001">
    <property type="entry name" value="Adenylosuccinate synthetase"/>
    <property type="match status" value="1"/>
</dbReference>
<dbReference type="Gene3D" id="3.40.440.10">
    <property type="entry name" value="Adenylosuccinate Synthetase, subunit A, domain 1"/>
    <property type="match status" value="1"/>
</dbReference>
<dbReference type="Gene3D" id="1.10.300.10">
    <property type="entry name" value="Adenylosuccinate Synthetase, subunit A, domain 2"/>
    <property type="match status" value="1"/>
</dbReference>
<dbReference type="Gene3D" id="3.90.170.10">
    <property type="entry name" value="Adenylosuccinate Synthetase, subunit A, domain 3"/>
    <property type="match status" value="1"/>
</dbReference>
<dbReference type="HAMAP" id="MF_00011">
    <property type="entry name" value="Adenylosucc_synth"/>
    <property type="match status" value="1"/>
</dbReference>
<dbReference type="InterPro" id="IPR018220">
    <property type="entry name" value="Adenylosuccin_syn_GTP-bd"/>
</dbReference>
<dbReference type="InterPro" id="IPR033128">
    <property type="entry name" value="Adenylosuccin_syn_Lys_AS"/>
</dbReference>
<dbReference type="InterPro" id="IPR042109">
    <property type="entry name" value="Adenylosuccinate_synth_dom1"/>
</dbReference>
<dbReference type="InterPro" id="IPR042110">
    <property type="entry name" value="Adenylosuccinate_synth_dom2"/>
</dbReference>
<dbReference type="InterPro" id="IPR042111">
    <property type="entry name" value="Adenylosuccinate_synth_dom3"/>
</dbReference>
<dbReference type="InterPro" id="IPR001114">
    <property type="entry name" value="Adenylosuccinate_synthetase"/>
</dbReference>
<dbReference type="InterPro" id="IPR027417">
    <property type="entry name" value="P-loop_NTPase"/>
</dbReference>
<dbReference type="NCBIfam" id="NF002223">
    <property type="entry name" value="PRK01117.1"/>
    <property type="match status" value="1"/>
</dbReference>
<dbReference type="NCBIfam" id="TIGR00184">
    <property type="entry name" value="purA"/>
    <property type="match status" value="1"/>
</dbReference>
<dbReference type="PANTHER" id="PTHR11846">
    <property type="entry name" value="ADENYLOSUCCINATE SYNTHETASE"/>
    <property type="match status" value="1"/>
</dbReference>
<dbReference type="PANTHER" id="PTHR11846:SF0">
    <property type="entry name" value="ADENYLOSUCCINATE SYNTHETASE"/>
    <property type="match status" value="1"/>
</dbReference>
<dbReference type="Pfam" id="PF00709">
    <property type="entry name" value="Adenylsucc_synt"/>
    <property type="match status" value="1"/>
</dbReference>
<dbReference type="SMART" id="SM00788">
    <property type="entry name" value="Adenylsucc_synt"/>
    <property type="match status" value="1"/>
</dbReference>
<dbReference type="SUPFAM" id="SSF52540">
    <property type="entry name" value="P-loop containing nucleoside triphosphate hydrolases"/>
    <property type="match status" value="1"/>
</dbReference>
<dbReference type="PROSITE" id="PS01266">
    <property type="entry name" value="ADENYLOSUCCIN_SYN_1"/>
    <property type="match status" value="1"/>
</dbReference>
<dbReference type="PROSITE" id="PS00513">
    <property type="entry name" value="ADENYLOSUCCIN_SYN_2"/>
    <property type="match status" value="1"/>
</dbReference>
<comment type="function">
    <text evidence="1">Plays an important role in the de novo pathway of purine nucleotide biosynthesis. Catalyzes the first committed step in the biosynthesis of AMP from IMP.</text>
</comment>
<comment type="catalytic activity">
    <reaction evidence="1">
        <text>IMP + L-aspartate + GTP = N(6)-(1,2-dicarboxyethyl)-AMP + GDP + phosphate + 2 H(+)</text>
        <dbReference type="Rhea" id="RHEA:15753"/>
        <dbReference type="ChEBI" id="CHEBI:15378"/>
        <dbReference type="ChEBI" id="CHEBI:29991"/>
        <dbReference type="ChEBI" id="CHEBI:37565"/>
        <dbReference type="ChEBI" id="CHEBI:43474"/>
        <dbReference type="ChEBI" id="CHEBI:57567"/>
        <dbReference type="ChEBI" id="CHEBI:58053"/>
        <dbReference type="ChEBI" id="CHEBI:58189"/>
        <dbReference type="EC" id="6.3.4.4"/>
    </reaction>
</comment>
<comment type="cofactor">
    <cofactor evidence="1">
        <name>Mg(2+)</name>
        <dbReference type="ChEBI" id="CHEBI:18420"/>
    </cofactor>
    <text evidence="1">Binds 1 Mg(2+) ion per subunit.</text>
</comment>
<comment type="pathway">
    <text evidence="1">Purine metabolism; AMP biosynthesis via de novo pathway; AMP from IMP: step 1/2.</text>
</comment>
<comment type="subunit">
    <text evidence="1">Homodimer.</text>
</comment>
<comment type="subcellular location">
    <subcellularLocation>
        <location evidence="1">Cytoplasm</location>
    </subcellularLocation>
</comment>
<comment type="similarity">
    <text evidence="1">Belongs to the adenylosuccinate synthetase family.</text>
</comment>
<name>PURA_STRP2</name>
<accession>Q04N48</accession>